<name>SYE_RALPJ</name>
<comment type="function">
    <text evidence="1">Catalyzes the attachment of glutamate to tRNA(Glu) in a two-step reaction: glutamate is first activated by ATP to form Glu-AMP and then transferred to the acceptor end of tRNA(Glu).</text>
</comment>
<comment type="catalytic activity">
    <reaction evidence="1">
        <text>tRNA(Glu) + L-glutamate + ATP = L-glutamyl-tRNA(Glu) + AMP + diphosphate</text>
        <dbReference type="Rhea" id="RHEA:23540"/>
        <dbReference type="Rhea" id="RHEA-COMP:9663"/>
        <dbReference type="Rhea" id="RHEA-COMP:9680"/>
        <dbReference type="ChEBI" id="CHEBI:29985"/>
        <dbReference type="ChEBI" id="CHEBI:30616"/>
        <dbReference type="ChEBI" id="CHEBI:33019"/>
        <dbReference type="ChEBI" id="CHEBI:78442"/>
        <dbReference type="ChEBI" id="CHEBI:78520"/>
        <dbReference type="ChEBI" id="CHEBI:456215"/>
        <dbReference type="EC" id="6.1.1.17"/>
    </reaction>
</comment>
<comment type="subunit">
    <text evidence="1">Monomer.</text>
</comment>
<comment type="subcellular location">
    <subcellularLocation>
        <location evidence="1">Cytoplasm</location>
    </subcellularLocation>
</comment>
<comment type="similarity">
    <text evidence="1">Belongs to the class-I aminoacyl-tRNA synthetase family. Glutamate--tRNA ligase type 1 subfamily.</text>
</comment>
<protein>
    <recommendedName>
        <fullName evidence="1">Glutamate--tRNA ligase</fullName>
        <ecNumber evidence="1">6.1.1.17</ecNumber>
    </recommendedName>
    <alternativeName>
        <fullName evidence="1">Glutamyl-tRNA synthetase</fullName>
        <shortName evidence="1">GluRS</shortName>
    </alternativeName>
</protein>
<reference key="1">
    <citation type="submission" date="2008-05" db="EMBL/GenBank/DDBJ databases">
        <title>Complete sequence of chromosome 1 of Ralstonia pickettii 12J.</title>
        <authorList>
            <person name="Lucas S."/>
            <person name="Copeland A."/>
            <person name="Lapidus A."/>
            <person name="Glavina del Rio T."/>
            <person name="Dalin E."/>
            <person name="Tice H."/>
            <person name="Bruce D."/>
            <person name="Goodwin L."/>
            <person name="Pitluck S."/>
            <person name="Meincke L."/>
            <person name="Brettin T."/>
            <person name="Detter J.C."/>
            <person name="Han C."/>
            <person name="Kuske C.R."/>
            <person name="Schmutz J."/>
            <person name="Larimer F."/>
            <person name="Land M."/>
            <person name="Hauser L."/>
            <person name="Kyrpides N."/>
            <person name="Mikhailova N."/>
            <person name="Marsh T."/>
            <person name="Richardson P."/>
        </authorList>
    </citation>
    <scope>NUCLEOTIDE SEQUENCE [LARGE SCALE GENOMIC DNA]</scope>
    <source>
        <strain>12J</strain>
    </source>
</reference>
<evidence type="ECO:0000255" key="1">
    <source>
        <dbReference type="HAMAP-Rule" id="MF_00022"/>
    </source>
</evidence>
<evidence type="ECO:0000256" key="2">
    <source>
        <dbReference type="SAM" id="MobiDB-lite"/>
    </source>
</evidence>
<sequence>MTQRVRTRFAPSPTGFIHLGNIRSALYPWAFARKMKGDFILRIEDTDVERSSQEAVDVILEAMDWLDMDIDEGPFYQMQRMDRYRAVVAQMVQQELAYPCYMSTEELDALREAQRERGEKPRYDGTWRPAPGKILPPPPAGVQPVIRFKNPIGGSVVWDDAVKGRIEISNDELDDLVIARPDGTPTYNFCVVVDDMDMQITHVIRGDDHVNNTPRQINILRALGGTPPVYAHLPTVLNEQGEKMSKRHGAMAVTGYRDAGYLPEAIVNYLARLGWAHGDAEIFSREQFIEWFDLEHLGKSPAQYNPEKLAWLNNHYIKQADNVRLAGLVKPFIEALGGKVDGGPVLADVVALVKDRANTLREVAQTALLFYRSDLAVEPELAAQHLTDDVRPGIAALAEKLGALPEWKREAIGAVFKEVLAAHGWKMPKLAMPVRLLVAGQLQTPSIDAVLELFGRDVVLHRLAA</sequence>
<keyword id="KW-0030">Aminoacyl-tRNA synthetase</keyword>
<keyword id="KW-0067">ATP-binding</keyword>
<keyword id="KW-0963">Cytoplasm</keyword>
<keyword id="KW-0436">Ligase</keyword>
<keyword id="KW-0547">Nucleotide-binding</keyword>
<keyword id="KW-0648">Protein biosynthesis</keyword>
<feature type="chain" id="PRO_0000367740" description="Glutamate--tRNA ligase">
    <location>
        <begin position="1"/>
        <end position="465"/>
    </location>
</feature>
<feature type="region of interest" description="Disordered" evidence="2">
    <location>
        <begin position="118"/>
        <end position="139"/>
    </location>
</feature>
<feature type="short sequence motif" description="'HIGH' region" evidence="1">
    <location>
        <begin position="11"/>
        <end position="21"/>
    </location>
</feature>
<feature type="short sequence motif" description="'KMSKS' region" evidence="1">
    <location>
        <begin position="243"/>
        <end position="247"/>
    </location>
</feature>
<feature type="binding site" evidence="1">
    <location>
        <position position="246"/>
    </location>
    <ligand>
        <name>ATP</name>
        <dbReference type="ChEBI" id="CHEBI:30616"/>
    </ligand>
</feature>
<proteinExistence type="inferred from homology"/>
<organism>
    <name type="scientific">Ralstonia pickettii (strain 12J)</name>
    <dbReference type="NCBI Taxonomy" id="402626"/>
    <lineage>
        <taxon>Bacteria</taxon>
        <taxon>Pseudomonadati</taxon>
        <taxon>Pseudomonadota</taxon>
        <taxon>Betaproteobacteria</taxon>
        <taxon>Burkholderiales</taxon>
        <taxon>Burkholderiaceae</taxon>
        <taxon>Ralstonia</taxon>
    </lineage>
</organism>
<gene>
    <name evidence="1" type="primary">gltX</name>
    <name type="ordered locus">Rpic_1022</name>
</gene>
<dbReference type="EC" id="6.1.1.17" evidence="1"/>
<dbReference type="EMBL" id="CP001068">
    <property type="protein sequence ID" value="ACD26170.1"/>
    <property type="molecule type" value="Genomic_DNA"/>
</dbReference>
<dbReference type="SMR" id="B2U9R2"/>
<dbReference type="STRING" id="402626.Rpic_1022"/>
<dbReference type="KEGG" id="rpi:Rpic_1022"/>
<dbReference type="PATRIC" id="fig|402626.5.peg.2226"/>
<dbReference type="eggNOG" id="COG0008">
    <property type="taxonomic scope" value="Bacteria"/>
</dbReference>
<dbReference type="HOGENOM" id="CLU_015768_6_0_4"/>
<dbReference type="GO" id="GO:0005829">
    <property type="term" value="C:cytosol"/>
    <property type="evidence" value="ECO:0007669"/>
    <property type="project" value="TreeGrafter"/>
</dbReference>
<dbReference type="GO" id="GO:0005524">
    <property type="term" value="F:ATP binding"/>
    <property type="evidence" value="ECO:0007669"/>
    <property type="project" value="UniProtKB-UniRule"/>
</dbReference>
<dbReference type="GO" id="GO:0004818">
    <property type="term" value="F:glutamate-tRNA ligase activity"/>
    <property type="evidence" value="ECO:0007669"/>
    <property type="project" value="UniProtKB-UniRule"/>
</dbReference>
<dbReference type="GO" id="GO:0000049">
    <property type="term" value="F:tRNA binding"/>
    <property type="evidence" value="ECO:0007669"/>
    <property type="project" value="InterPro"/>
</dbReference>
<dbReference type="GO" id="GO:0008270">
    <property type="term" value="F:zinc ion binding"/>
    <property type="evidence" value="ECO:0007669"/>
    <property type="project" value="InterPro"/>
</dbReference>
<dbReference type="GO" id="GO:0006424">
    <property type="term" value="P:glutamyl-tRNA aminoacylation"/>
    <property type="evidence" value="ECO:0007669"/>
    <property type="project" value="UniProtKB-UniRule"/>
</dbReference>
<dbReference type="CDD" id="cd00808">
    <property type="entry name" value="GluRS_core"/>
    <property type="match status" value="1"/>
</dbReference>
<dbReference type="FunFam" id="3.40.50.620:FF:000007">
    <property type="entry name" value="Glutamate--tRNA ligase"/>
    <property type="match status" value="1"/>
</dbReference>
<dbReference type="Gene3D" id="1.10.10.350">
    <property type="match status" value="1"/>
</dbReference>
<dbReference type="Gene3D" id="1.10.8.70">
    <property type="entry name" value="Glutamate-tRNA synthetase, class I, anticodon-binding domain 1"/>
    <property type="match status" value="1"/>
</dbReference>
<dbReference type="Gene3D" id="3.40.50.620">
    <property type="entry name" value="HUPs"/>
    <property type="match status" value="1"/>
</dbReference>
<dbReference type="HAMAP" id="MF_00022">
    <property type="entry name" value="Glu_tRNA_synth_type1"/>
    <property type="match status" value="1"/>
</dbReference>
<dbReference type="InterPro" id="IPR045462">
    <property type="entry name" value="aa-tRNA-synth_I_cd-bd"/>
</dbReference>
<dbReference type="InterPro" id="IPR020751">
    <property type="entry name" value="aa-tRNA-synth_I_codon-bd_sub2"/>
</dbReference>
<dbReference type="InterPro" id="IPR001412">
    <property type="entry name" value="aa-tRNA-synth_I_CS"/>
</dbReference>
<dbReference type="InterPro" id="IPR008925">
    <property type="entry name" value="aa_tRNA-synth_I_cd-bd_sf"/>
</dbReference>
<dbReference type="InterPro" id="IPR004527">
    <property type="entry name" value="Glu-tRNA-ligase_bac/mito"/>
</dbReference>
<dbReference type="InterPro" id="IPR020752">
    <property type="entry name" value="Glu-tRNA-synth_I_codon-bd_sub1"/>
</dbReference>
<dbReference type="InterPro" id="IPR000924">
    <property type="entry name" value="Glu/Gln-tRNA-synth"/>
</dbReference>
<dbReference type="InterPro" id="IPR020058">
    <property type="entry name" value="Glu/Gln-tRNA-synth_Ib_cat-dom"/>
</dbReference>
<dbReference type="InterPro" id="IPR049940">
    <property type="entry name" value="GluQ/Sye"/>
</dbReference>
<dbReference type="InterPro" id="IPR033910">
    <property type="entry name" value="GluRS_core"/>
</dbReference>
<dbReference type="InterPro" id="IPR014729">
    <property type="entry name" value="Rossmann-like_a/b/a_fold"/>
</dbReference>
<dbReference type="NCBIfam" id="TIGR00464">
    <property type="entry name" value="gltX_bact"/>
    <property type="match status" value="1"/>
</dbReference>
<dbReference type="PANTHER" id="PTHR43311">
    <property type="entry name" value="GLUTAMATE--TRNA LIGASE"/>
    <property type="match status" value="1"/>
</dbReference>
<dbReference type="PANTHER" id="PTHR43311:SF2">
    <property type="entry name" value="GLUTAMATE--TRNA LIGASE, MITOCHONDRIAL-RELATED"/>
    <property type="match status" value="1"/>
</dbReference>
<dbReference type="Pfam" id="PF19269">
    <property type="entry name" value="Anticodon_2"/>
    <property type="match status" value="1"/>
</dbReference>
<dbReference type="Pfam" id="PF00749">
    <property type="entry name" value="tRNA-synt_1c"/>
    <property type="match status" value="1"/>
</dbReference>
<dbReference type="PRINTS" id="PR00987">
    <property type="entry name" value="TRNASYNTHGLU"/>
</dbReference>
<dbReference type="SUPFAM" id="SSF48163">
    <property type="entry name" value="An anticodon-binding domain of class I aminoacyl-tRNA synthetases"/>
    <property type="match status" value="1"/>
</dbReference>
<dbReference type="SUPFAM" id="SSF52374">
    <property type="entry name" value="Nucleotidylyl transferase"/>
    <property type="match status" value="1"/>
</dbReference>
<dbReference type="PROSITE" id="PS00178">
    <property type="entry name" value="AA_TRNA_LIGASE_I"/>
    <property type="match status" value="1"/>
</dbReference>
<accession>B2U9R2</accession>